<keyword id="KW-0342">GTP-binding</keyword>
<keyword id="KW-0547">Nucleotide-binding</keyword>
<keyword id="KW-1185">Reference proteome</keyword>
<keyword id="KW-0807">Transducer</keyword>
<reference key="1">
    <citation type="journal article" date="2005" name="Nature">
        <title>The genome of the social amoeba Dictyostelium discoideum.</title>
        <authorList>
            <person name="Eichinger L."/>
            <person name="Pachebat J.A."/>
            <person name="Gloeckner G."/>
            <person name="Rajandream M.A."/>
            <person name="Sucgang R."/>
            <person name="Berriman M."/>
            <person name="Song J."/>
            <person name="Olsen R."/>
            <person name="Szafranski K."/>
            <person name="Xu Q."/>
            <person name="Tunggal B."/>
            <person name="Kummerfeld S."/>
            <person name="Madera M."/>
            <person name="Konfortov B.A."/>
            <person name="Rivero F."/>
            <person name="Bankier A.T."/>
            <person name="Lehmann R."/>
            <person name="Hamlin N."/>
            <person name="Davies R."/>
            <person name="Gaudet P."/>
            <person name="Fey P."/>
            <person name="Pilcher K."/>
            <person name="Chen G."/>
            <person name="Saunders D."/>
            <person name="Sodergren E.J."/>
            <person name="Davis P."/>
            <person name="Kerhornou A."/>
            <person name="Nie X."/>
            <person name="Hall N."/>
            <person name="Anjard C."/>
            <person name="Hemphill L."/>
            <person name="Bason N."/>
            <person name="Farbrother P."/>
            <person name="Desany B."/>
            <person name="Just E."/>
            <person name="Morio T."/>
            <person name="Rost R."/>
            <person name="Churcher C.M."/>
            <person name="Cooper J."/>
            <person name="Haydock S."/>
            <person name="van Driessche N."/>
            <person name="Cronin A."/>
            <person name="Goodhead I."/>
            <person name="Muzny D.M."/>
            <person name="Mourier T."/>
            <person name="Pain A."/>
            <person name="Lu M."/>
            <person name="Harper D."/>
            <person name="Lindsay R."/>
            <person name="Hauser H."/>
            <person name="James K.D."/>
            <person name="Quiles M."/>
            <person name="Madan Babu M."/>
            <person name="Saito T."/>
            <person name="Buchrieser C."/>
            <person name="Wardroper A."/>
            <person name="Felder M."/>
            <person name="Thangavelu M."/>
            <person name="Johnson D."/>
            <person name="Knights A."/>
            <person name="Loulseged H."/>
            <person name="Mungall K.L."/>
            <person name="Oliver K."/>
            <person name="Price C."/>
            <person name="Quail M.A."/>
            <person name="Urushihara H."/>
            <person name="Hernandez J."/>
            <person name="Rabbinowitsch E."/>
            <person name="Steffen D."/>
            <person name="Sanders M."/>
            <person name="Ma J."/>
            <person name="Kohara Y."/>
            <person name="Sharp S."/>
            <person name="Simmonds M.N."/>
            <person name="Spiegler S."/>
            <person name="Tivey A."/>
            <person name="Sugano S."/>
            <person name="White B."/>
            <person name="Walker D."/>
            <person name="Woodward J.R."/>
            <person name="Winckler T."/>
            <person name="Tanaka Y."/>
            <person name="Shaulsky G."/>
            <person name="Schleicher M."/>
            <person name="Weinstock G.M."/>
            <person name="Rosenthal A."/>
            <person name="Cox E.C."/>
            <person name="Chisholm R.L."/>
            <person name="Gibbs R.A."/>
            <person name="Loomis W.F."/>
            <person name="Platzer M."/>
            <person name="Kay R.R."/>
            <person name="Williams J.G."/>
            <person name="Dear P.H."/>
            <person name="Noegel A.A."/>
            <person name="Barrell B.G."/>
            <person name="Kuspa A."/>
        </authorList>
    </citation>
    <scope>NUCLEOTIDE SEQUENCE [LARGE SCALE GENOMIC DNA]</scope>
    <source>
        <strain>AX4</strain>
    </source>
</reference>
<protein>
    <recommendedName>
        <fullName>Guanine nucleotide-binding protein-like alpha-10 subunit</fullName>
    </recommendedName>
</protein>
<evidence type="ECO:0000250" key="1"/>
<evidence type="ECO:0000255" key="2">
    <source>
        <dbReference type="PROSITE-ProRule" id="PRU01230"/>
    </source>
</evidence>
<evidence type="ECO:0000305" key="3"/>
<organism>
    <name type="scientific">Dictyostelium discoideum</name>
    <name type="common">Social amoeba</name>
    <dbReference type="NCBI Taxonomy" id="44689"/>
    <lineage>
        <taxon>Eukaryota</taxon>
        <taxon>Amoebozoa</taxon>
        <taxon>Evosea</taxon>
        <taxon>Eumycetozoa</taxon>
        <taxon>Dictyostelia</taxon>
        <taxon>Dictyosteliales</taxon>
        <taxon>Dictyosteliaceae</taxon>
        <taxon>Dictyostelium</taxon>
    </lineage>
</organism>
<comment type="similarity">
    <text evidence="3">Belongs to the G-alpha family.</text>
</comment>
<comment type="caution">
    <text evidence="3">Although this protein belongs to the G-alpha family, its Walker A GTP-binding motif is defective and therefore both its GTP-binding activity and function are dubious.</text>
</comment>
<sequence length="349" mass="40929">MSFLCSENSYQQQSKISIDIDKSLKNHKLKLEEEIRVLIYGQKKVGVTTLFKTFLLMGESQITPEELMDNRNNVYKTIINQLKKFIIISNNSKIELENNNNIQMSNLILELDSENFLWNKEIGETCLKLWNDSGIQKIFQSQFSEFFGYFFKHLQRISDENYTPTPQDLNFIKLTQNGIIEGKFTFERCLIKMIEMGIQTSTLKKWINCFSEVQAIIYVIDLSVYDIVESEDCSKSINKLEKSLNGFKEIIESKYLHGCGVIVFFNKKDIFREKLKTVPFKTYDKDYIGENDFESTTNFIKNKLLDYYSNPNKNVYFLINEESEVDICRSTFNILKDIVLNITYNSVKN</sequence>
<proteinExistence type="inferred from homology"/>
<dbReference type="EMBL" id="AAFI02000004">
    <property type="protein sequence ID" value="EAL72990.1"/>
    <property type="molecule type" value="Genomic_DNA"/>
</dbReference>
<dbReference type="RefSeq" id="XP_646975.1">
    <property type="nucleotide sequence ID" value="XM_641883.1"/>
</dbReference>
<dbReference type="SMR" id="Q55EP5"/>
<dbReference type="FunCoup" id="Q55EP5">
    <property type="interactions" value="2"/>
</dbReference>
<dbReference type="STRING" id="44689.Q55EP5"/>
<dbReference type="PaxDb" id="44689-DDB0230129"/>
<dbReference type="EnsemblProtists" id="EAL72990">
    <property type="protein sequence ID" value="EAL72990"/>
    <property type="gene ID" value="DDB_G0268802"/>
</dbReference>
<dbReference type="GeneID" id="8616667"/>
<dbReference type="KEGG" id="ddi:DDB_G0268802"/>
<dbReference type="dictyBase" id="DDB_G0268802">
    <property type="gene designation" value="gpaJ"/>
</dbReference>
<dbReference type="VEuPathDB" id="AmoebaDB:DDB_G0268802"/>
<dbReference type="eggNOG" id="KOG0082">
    <property type="taxonomic scope" value="Eukaryota"/>
</dbReference>
<dbReference type="HOGENOM" id="CLU_014184_6_0_1"/>
<dbReference type="InParanoid" id="Q55EP5"/>
<dbReference type="PhylomeDB" id="Q55EP5"/>
<dbReference type="Reactome" id="R-DDI-112043">
    <property type="pathway name" value="PLC beta mediated events"/>
</dbReference>
<dbReference type="Reactome" id="R-DDI-170660">
    <property type="pathway name" value="Adenylate cyclase activating pathway"/>
</dbReference>
<dbReference type="Reactome" id="R-DDI-170670">
    <property type="pathway name" value="Adenylate cyclase inhibitory pathway"/>
</dbReference>
<dbReference type="Reactome" id="R-DDI-202040">
    <property type="pathway name" value="G-protein activation"/>
</dbReference>
<dbReference type="Reactome" id="R-DDI-399997">
    <property type="pathway name" value="Acetylcholine regulates insulin secretion"/>
</dbReference>
<dbReference type="Reactome" id="R-DDI-416476">
    <property type="pathway name" value="G alpha (q) signalling events"/>
</dbReference>
<dbReference type="Reactome" id="R-DDI-416482">
    <property type="pathway name" value="G alpha (12/13) signalling events"/>
</dbReference>
<dbReference type="Reactome" id="R-DDI-418592">
    <property type="pathway name" value="ADP signalling through P2Y purinoceptor 1"/>
</dbReference>
<dbReference type="Reactome" id="R-DDI-434316">
    <property type="pathway name" value="Fatty Acids bound to GPR40 (FFAR1) regulate insulin secretion"/>
</dbReference>
<dbReference type="Reactome" id="R-DDI-9013148">
    <property type="pathway name" value="CDC42 GTPase cycle"/>
</dbReference>
<dbReference type="Reactome" id="R-DDI-9013149">
    <property type="pathway name" value="RAC1 GTPase cycle"/>
</dbReference>
<dbReference type="Reactome" id="R-DDI-9856530">
    <property type="pathway name" value="High laminar flow shear stress activates signaling by PIEZO1 and PECAM1:CDH5:KDR in endothelial cells"/>
</dbReference>
<dbReference type="PRO" id="PR:Q55EP5"/>
<dbReference type="Proteomes" id="UP000002195">
    <property type="component" value="Chromosome 1"/>
</dbReference>
<dbReference type="GO" id="GO:0005737">
    <property type="term" value="C:cytoplasm"/>
    <property type="evidence" value="ECO:0000318"/>
    <property type="project" value="GO_Central"/>
</dbReference>
<dbReference type="GO" id="GO:0005834">
    <property type="term" value="C:heterotrimeric G-protein complex"/>
    <property type="evidence" value="ECO:0000318"/>
    <property type="project" value="GO_Central"/>
</dbReference>
<dbReference type="GO" id="GO:0001664">
    <property type="term" value="F:G protein-coupled receptor binding"/>
    <property type="evidence" value="ECO:0000318"/>
    <property type="project" value="GO_Central"/>
</dbReference>
<dbReference type="GO" id="GO:0031683">
    <property type="term" value="F:G-protein beta/gamma-subunit complex binding"/>
    <property type="evidence" value="ECO:0000318"/>
    <property type="project" value="GO_Central"/>
</dbReference>
<dbReference type="GO" id="GO:0005525">
    <property type="term" value="F:GTP binding"/>
    <property type="evidence" value="ECO:0007669"/>
    <property type="project" value="UniProtKB-KW"/>
</dbReference>
<dbReference type="GO" id="GO:0003924">
    <property type="term" value="F:GTPase activity"/>
    <property type="evidence" value="ECO:0000318"/>
    <property type="project" value="GO_Central"/>
</dbReference>
<dbReference type="GO" id="GO:0007188">
    <property type="term" value="P:adenylate cyclase-modulating G protein-coupled receptor signaling pathway"/>
    <property type="evidence" value="ECO:0000318"/>
    <property type="project" value="GO_Central"/>
</dbReference>
<dbReference type="CDD" id="cd00066">
    <property type="entry name" value="G-alpha"/>
    <property type="match status" value="1"/>
</dbReference>
<dbReference type="FunFam" id="3.40.50.300:FF:004201">
    <property type="entry name" value="Guanine nucleotide-binding protein-like alpha-10 subunit"/>
    <property type="match status" value="1"/>
</dbReference>
<dbReference type="Gene3D" id="1.10.400.10">
    <property type="entry name" value="GI Alpha 1, domain 2-like"/>
    <property type="match status" value="1"/>
</dbReference>
<dbReference type="Gene3D" id="3.40.50.300">
    <property type="entry name" value="P-loop containing nucleotide triphosphate hydrolases"/>
    <property type="match status" value="1"/>
</dbReference>
<dbReference type="InterPro" id="IPR001019">
    <property type="entry name" value="Gprotein_alpha_su"/>
</dbReference>
<dbReference type="InterPro" id="IPR011025">
    <property type="entry name" value="GproteinA_insert"/>
</dbReference>
<dbReference type="InterPro" id="IPR027417">
    <property type="entry name" value="P-loop_NTPase"/>
</dbReference>
<dbReference type="PANTHER" id="PTHR10218">
    <property type="entry name" value="GTP-BINDING PROTEIN ALPHA SUBUNIT"/>
    <property type="match status" value="1"/>
</dbReference>
<dbReference type="PANTHER" id="PTHR10218:SF324">
    <property type="entry name" value="GUANINE NUCLEOTIDE-BINDING PROTEIN ALPHA-6 SUBUNIT-RELATED"/>
    <property type="match status" value="1"/>
</dbReference>
<dbReference type="Pfam" id="PF00503">
    <property type="entry name" value="G-alpha"/>
    <property type="match status" value="1"/>
</dbReference>
<dbReference type="PRINTS" id="PR00318">
    <property type="entry name" value="GPROTEINA"/>
</dbReference>
<dbReference type="SMART" id="SM00275">
    <property type="entry name" value="G_alpha"/>
    <property type="match status" value="1"/>
</dbReference>
<dbReference type="SUPFAM" id="SSF52540">
    <property type="entry name" value="P-loop containing nucleoside triphosphate hydrolases"/>
    <property type="match status" value="1"/>
</dbReference>
<dbReference type="SUPFAM" id="SSF47895">
    <property type="entry name" value="Transducin (alpha subunit), insertion domain"/>
    <property type="match status" value="1"/>
</dbReference>
<dbReference type="PROSITE" id="PS51882">
    <property type="entry name" value="G_ALPHA"/>
    <property type="match status" value="1"/>
</dbReference>
<gene>
    <name type="primary">gpaJ</name>
    <name type="synonym">gpa10</name>
    <name type="ORF">DDB_G0268802</name>
</gene>
<feature type="chain" id="PRO_0000327590" description="Guanine nucleotide-binding protein-like alpha-10 subunit">
    <location>
        <begin position="1"/>
        <end position="349"/>
    </location>
</feature>
<feature type="domain" description="G-alpha" evidence="2">
    <location>
        <begin position="33"/>
        <end position="349"/>
    </location>
</feature>
<feature type="region of interest" description="G1 motif" evidence="2">
    <location>
        <begin position="36"/>
        <end position="49"/>
    </location>
</feature>
<feature type="region of interest" description="G2 motif" evidence="2">
    <location>
        <begin position="168"/>
        <end position="176"/>
    </location>
</feature>
<feature type="region of interest" description="G3 motif" evidence="2">
    <location>
        <begin position="191"/>
        <end position="200"/>
    </location>
</feature>
<feature type="region of interest" description="G4 motif" evidence="2">
    <location>
        <begin position="262"/>
        <end position="269"/>
    </location>
</feature>
<feature type="region of interest" description="G5 motif" evidence="2">
    <location>
        <begin position="320"/>
        <end position="325"/>
    </location>
</feature>
<feature type="binding site" evidence="1">
    <location>
        <begin position="195"/>
        <end position="199"/>
    </location>
    <ligand>
        <name>GTP</name>
        <dbReference type="ChEBI" id="CHEBI:37565"/>
    </ligand>
</feature>
<feature type="binding site" evidence="1">
    <location>
        <begin position="266"/>
        <end position="269"/>
    </location>
    <ligand>
        <name>GTP</name>
        <dbReference type="ChEBI" id="CHEBI:37565"/>
    </ligand>
</feature>
<name>GPA10_DICDI</name>
<accession>Q55EP5</accession>